<proteinExistence type="inferred from homology"/>
<feature type="chain" id="PRO_0000182605" description="Flagellin FljO">
    <location>
        <begin position="1"/>
        <end position="273"/>
    </location>
</feature>
<keyword id="KW-0975">Bacterial flagellum</keyword>
<keyword id="KW-1185">Reference proteome</keyword>
<keyword id="KW-0964">Secreted</keyword>
<reference key="1">
    <citation type="journal article" date="2000" name="J. Bacteriol.">
        <title>A family of six flagellin genes contributes to the Caulobacter crescentus flagellar filament.</title>
        <authorList>
            <person name="Ely B."/>
            <person name="Ely T.W."/>
            <person name="Crymes W.B. Jr."/>
            <person name="Minnich S.A."/>
        </authorList>
    </citation>
    <scope>NUCLEOTIDE SEQUENCE [GENOMIC DNA]</scope>
    <source>
        <strain>ATCC 19089 / CIP 103742 / CB 15</strain>
    </source>
</reference>
<reference key="2">
    <citation type="journal article" date="2001" name="Proc. Natl. Acad. Sci. U.S.A.">
        <title>Complete genome sequence of Caulobacter crescentus.</title>
        <authorList>
            <person name="Nierman W.C."/>
            <person name="Feldblyum T.V."/>
            <person name="Laub M.T."/>
            <person name="Paulsen I.T."/>
            <person name="Nelson K.E."/>
            <person name="Eisen J.A."/>
            <person name="Heidelberg J.F."/>
            <person name="Alley M.R.K."/>
            <person name="Ohta N."/>
            <person name="Maddock J.R."/>
            <person name="Potocka I."/>
            <person name="Nelson W.C."/>
            <person name="Newton A."/>
            <person name="Stephens C."/>
            <person name="Phadke N.D."/>
            <person name="Ely B."/>
            <person name="DeBoy R.T."/>
            <person name="Dodson R.J."/>
            <person name="Durkin A.S."/>
            <person name="Gwinn M.L."/>
            <person name="Haft D.H."/>
            <person name="Kolonay J.F."/>
            <person name="Smit J."/>
            <person name="Craven M.B."/>
            <person name="Khouri H.M."/>
            <person name="Shetty J."/>
            <person name="Berry K.J."/>
            <person name="Utterback T.R."/>
            <person name="Tran K."/>
            <person name="Wolf A.M."/>
            <person name="Vamathevan J.J."/>
            <person name="Ermolaeva M.D."/>
            <person name="White O."/>
            <person name="Salzberg S.L."/>
            <person name="Venter J.C."/>
            <person name="Shapiro L."/>
            <person name="Fraser C.M."/>
        </authorList>
    </citation>
    <scope>NUCLEOTIDE SEQUENCE [LARGE SCALE GENOMIC DNA]</scope>
    <source>
        <strain>ATCC 19089 / CIP 103742 / CB 15</strain>
    </source>
</reference>
<organism>
    <name type="scientific">Caulobacter vibrioides (strain ATCC 19089 / CIP 103742 / CB 15)</name>
    <name type="common">Caulobacter crescentus</name>
    <dbReference type="NCBI Taxonomy" id="190650"/>
    <lineage>
        <taxon>Bacteria</taxon>
        <taxon>Pseudomonadati</taxon>
        <taxon>Pseudomonadota</taxon>
        <taxon>Alphaproteobacteria</taxon>
        <taxon>Caulobacterales</taxon>
        <taxon>Caulobacteraceae</taxon>
        <taxon>Caulobacter</taxon>
    </lineage>
</organism>
<protein>
    <recommendedName>
        <fullName>Flagellin FljO</fullName>
    </recommendedName>
</protein>
<sequence>MALNSINTNSGALIALQNLNTTSSELNNVQQRISTGKKIGSAKDNGAIWATAKNQSATANSINAVKDSLQRGQSTIDVALAAGDTITDLLGKMKEKALAASDTSLSTASFNALKADFDSLRDQVTKAATNAKFNGVSIADGTTTKLSFLANSDGSAFTVTAKTLTLGGLGLTTTSSFTTAAAAKTMIGTIDTALQTATNKLASLGTSSTGLDTHLTFVGKLQDSLDAGVGNLMDADLAKESARLQSLQTKQQLGVQALSIANSSSSAILSLFR</sequence>
<name>FLJO_CAUVC</name>
<accession>O52531</accession>
<comment type="function">
    <text>Flagellin is the subunit protein which polymerizes to form the filaments of bacterial flagella.</text>
</comment>
<comment type="subunit">
    <text>In C.crescentus, the flagellar filament is composed of multiple flagellins of 29 kDa; 27 kDa and 25 kDa.</text>
</comment>
<comment type="subcellular location">
    <subcellularLocation>
        <location>Secreted</location>
    </subcellularLocation>
    <subcellularLocation>
        <location>Bacterial flagellum</location>
    </subcellularLocation>
</comment>
<comment type="similarity">
    <text evidence="1">Belongs to the bacterial flagellin family.</text>
</comment>
<dbReference type="EMBL" id="AF040268">
    <property type="protein sequence ID" value="AAB95382.2"/>
    <property type="molecule type" value="Genomic_DNA"/>
</dbReference>
<dbReference type="EMBL" id="AE005673">
    <property type="protein sequence ID" value="AAK22779.1"/>
    <property type="molecule type" value="Genomic_DNA"/>
</dbReference>
<dbReference type="PIR" id="G87347">
    <property type="entry name" value="G87347"/>
</dbReference>
<dbReference type="RefSeq" id="NP_419611.1">
    <property type="nucleotide sequence ID" value="NC_002696.2"/>
</dbReference>
<dbReference type="RefSeq" id="WP_010918679.1">
    <property type="nucleotide sequence ID" value="NC_002696.2"/>
</dbReference>
<dbReference type="SMR" id="O52531"/>
<dbReference type="STRING" id="190650.CC_0794"/>
<dbReference type="EnsemblBacteria" id="AAK22779">
    <property type="protein sequence ID" value="AAK22779"/>
    <property type="gene ID" value="CC_0794"/>
</dbReference>
<dbReference type="KEGG" id="ccr:CC_0794"/>
<dbReference type="PATRIC" id="fig|190650.5.peg.806"/>
<dbReference type="eggNOG" id="COG1344">
    <property type="taxonomic scope" value="Bacteria"/>
</dbReference>
<dbReference type="HOGENOM" id="CLU_011142_1_0_5"/>
<dbReference type="BioCyc" id="CAULO:CC0794-MONOMER"/>
<dbReference type="Proteomes" id="UP000001816">
    <property type="component" value="Chromosome"/>
</dbReference>
<dbReference type="GO" id="GO:0009288">
    <property type="term" value="C:bacterial-type flagellum"/>
    <property type="evidence" value="ECO:0007669"/>
    <property type="project" value="UniProtKB-SubCell"/>
</dbReference>
<dbReference type="GO" id="GO:0005576">
    <property type="term" value="C:extracellular region"/>
    <property type="evidence" value="ECO:0007669"/>
    <property type="project" value="UniProtKB-SubCell"/>
</dbReference>
<dbReference type="GO" id="GO:0005198">
    <property type="term" value="F:structural molecule activity"/>
    <property type="evidence" value="ECO:0007669"/>
    <property type="project" value="InterPro"/>
</dbReference>
<dbReference type="Gene3D" id="1.20.1330.10">
    <property type="entry name" value="f41 fragment of flagellin, N-terminal domain"/>
    <property type="match status" value="1"/>
</dbReference>
<dbReference type="InterPro" id="IPR001492">
    <property type="entry name" value="Flagellin"/>
</dbReference>
<dbReference type="InterPro" id="IPR046358">
    <property type="entry name" value="Flagellin_C"/>
</dbReference>
<dbReference type="InterPro" id="IPR001029">
    <property type="entry name" value="Flagellin_N"/>
</dbReference>
<dbReference type="PANTHER" id="PTHR42792">
    <property type="entry name" value="FLAGELLIN"/>
    <property type="match status" value="1"/>
</dbReference>
<dbReference type="PANTHER" id="PTHR42792:SF2">
    <property type="entry name" value="FLAGELLIN"/>
    <property type="match status" value="1"/>
</dbReference>
<dbReference type="Pfam" id="PF00700">
    <property type="entry name" value="Flagellin_C"/>
    <property type="match status" value="1"/>
</dbReference>
<dbReference type="Pfam" id="PF00669">
    <property type="entry name" value="Flagellin_N"/>
    <property type="match status" value="1"/>
</dbReference>
<dbReference type="PRINTS" id="PR00207">
    <property type="entry name" value="FLAGELLIN"/>
</dbReference>
<dbReference type="SUPFAM" id="SSF64518">
    <property type="entry name" value="Phase 1 flagellin"/>
    <property type="match status" value="1"/>
</dbReference>
<evidence type="ECO:0000305" key="1"/>
<gene>
    <name type="primary">fljO</name>
    <name type="ordered locus">CC_0794</name>
</gene>